<evidence type="ECO:0000255" key="1">
    <source>
        <dbReference type="HAMAP-Rule" id="MF_00060"/>
    </source>
</evidence>
<feature type="chain" id="PRO_1000075026" description="5'-nucleotidase SurE">
    <location>
        <begin position="1"/>
        <end position="261"/>
    </location>
</feature>
<feature type="binding site" evidence="1">
    <location>
        <position position="8"/>
    </location>
    <ligand>
        <name>a divalent metal cation</name>
        <dbReference type="ChEBI" id="CHEBI:60240"/>
    </ligand>
</feature>
<feature type="binding site" evidence="1">
    <location>
        <position position="9"/>
    </location>
    <ligand>
        <name>a divalent metal cation</name>
        <dbReference type="ChEBI" id="CHEBI:60240"/>
    </ligand>
</feature>
<feature type="binding site" evidence="1">
    <location>
        <position position="43"/>
    </location>
    <ligand>
        <name>a divalent metal cation</name>
        <dbReference type="ChEBI" id="CHEBI:60240"/>
    </ligand>
</feature>
<feature type="binding site" evidence="1">
    <location>
        <position position="96"/>
    </location>
    <ligand>
        <name>a divalent metal cation</name>
        <dbReference type="ChEBI" id="CHEBI:60240"/>
    </ligand>
</feature>
<organism>
    <name type="scientific">Dinoroseobacter shibae (strain DSM 16493 / NCIMB 14021 / DFL 12)</name>
    <dbReference type="NCBI Taxonomy" id="398580"/>
    <lineage>
        <taxon>Bacteria</taxon>
        <taxon>Pseudomonadati</taxon>
        <taxon>Pseudomonadota</taxon>
        <taxon>Alphaproteobacteria</taxon>
        <taxon>Rhodobacterales</taxon>
        <taxon>Roseobacteraceae</taxon>
        <taxon>Dinoroseobacter</taxon>
    </lineage>
</organism>
<reference key="1">
    <citation type="journal article" date="2010" name="ISME J.">
        <title>The complete genome sequence of the algal symbiont Dinoroseobacter shibae: a hitchhiker's guide to life in the sea.</title>
        <authorList>
            <person name="Wagner-Dobler I."/>
            <person name="Ballhausen B."/>
            <person name="Berger M."/>
            <person name="Brinkhoff T."/>
            <person name="Buchholz I."/>
            <person name="Bunk B."/>
            <person name="Cypionka H."/>
            <person name="Daniel R."/>
            <person name="Drepper T."/>
            <person name="Gerdts G."/>
            <person name="Hahnke S."/>
            <person name="Han C."/>
            <person name="Jahn D."/>
            <person name="Kalhoefer D."/>
            <person name="Kiss H."/>
            <person name="Klenk H.P."/>
            <person name="Kyrpides N."/>
            <person name="Liebl W."/>
            <person name="Liesegang H."/>
            <person name="Meincke L."/>
            <person name="Pati A."/>
            <person name="Petersen J."/>
            <person name="Piekarski T."/>
            <person name="Pommerenke C."/>
            <person name="Pradella S."/>
            <person name="Pukall R."/>
            <person name="Rabus R."/>
            <person name="Stackebrandt E."/>
            <person name="Thole S."/>
            <person name="Thompson L."/>
            <person name="Tielen P."/>
            <person name="Tomasch J."/>
            <person name="von Jan M."/>
            <person name="Wanphrut N."/>
            <person name="Wichels A."/>
            <person name="Zech H."/>
            <person name="Simon M."/>
        </authorList>
    </citation>
    <scope>NUCLEOTIDE SEQUENCE [LARGE SCALE GENOMIC DNA]</scope>
    <source>
        <strain>DSM 16493 / NCIMB 14021 / DFL 12</strain>
    </source>
</reference>
<gene>
    <name evidence="1" type="primary">surE</name>
    <name type="ordered locus">Dshi_2136</name>
</gene>
<sequence>MRILITNDDGINAPGLEVLAEIAAEIAGPGGEVWTVAPAFEQSGVGHCISYTQPTMIAELGPRRYAAEGSPADCVMAGLYDVMNGDAPDLILSGVNRGNNSGENALYSGTLGGAMEGALQGHKAIALSQYYGPAMATADDPFDAARRHGVAVVRKLLAADQWGGPGYGTFYNVNFPPVLAAGVKGVRAAPQGLRSHARFRVEAQLSPSGRRFLWVQGSAQNVPAEQGSDVSLNLDGYISVTPMRADLTAYDKLADLEAALA</sequence>
<proteinExistence type="inferred from homology"/>
<keyword id="KW-0963">Cytoplasm</keyword>
<keyword id="KW-0378">Hydrolase</keyword>
<keyword id="KW-0479">Metal-binding</keyword>
<keyword id="KW-0547">Nucleotide-binding</keyword>
<keyword id="KW-1185">Reference proteome</keyword>
<dbReference type="EC" id="3.1.3.5" evidence="1"/>
<dbReference type="EMBL" id="CP000830">
    <property type="protein sequence ID" value="ABV93872.1"/>
    <property type="molecule type" value="Genomic_DNA"/>
</dbReference>
<dbReference type="RefSeq" id="WP_012178804.1">
    <property type="nucleotide sequence ID" value="NC_009952.1"/>
</dbReference>
<dbReference type="SMR" id="A8LQK5"/>
<dbReference type="STRING" id="398580.Dshi_2136"/>
<dbReference type="KEGG" id="dsh:Dshi_2136"/>
<dbReference type="eggNOG" id="COG0496">
    <property type="taxonomic scope" value="Bacteria"/>
</dbReference>
<dbReference type="HOGENOM" id="CLU_045192_1_2_5"/>
<dbReference type="OrthoDB" id="9780815at2"/>
<dbReference type="Proteomes" id="UP000006833">
    <property type="component" value="Chromosome"/>
</dbReference>
<dbReference type="GO" id="GO:0005737">
    <property type="term" value="C:cytoplasm"/>
    <property type="evidence" value="ECO:0007669"/>
    <property type="project" value="UniProtKB-SubCell"/>
</dbReference>
<dbReference type="GO" id="GO:0008254">
    <property type="term" value="F:3'-nucleotidase activity"/>
    <property type="evidence" value="ECO:0007669"/>
    <property type="project" value="TreeGrafter"/>
</dbReference>
<dbReference type="GO" id="GO:0008253">
    <property type="term" value="F:5'-nucleotidase activity"/>
    <property type="evidence" value="ECO:0007669"/>
    <property type="project" value="UniProtKB-UniRule"/>
</dbReference>
<dbReference type="GO" id="GO:0004309">
    <property type="term" value="F:exopolyphosphatase activity"/>
    <property type="evidence" value="ECO:0007669"/>
    <property type="project" value="TreeGrafter"/>
</dbReference>
<dbReference type="GO" id="GO:0046872">
    <property type="term" value="F:metal ion binding"/>
    <property type="evidence" value="ECO:0007669"/>
    <property type="project" value="UniProtKB-UniRule"/>
</dbReference>
<dbReference type="GO" id="GO:0000166">
    <property type="term" value="F:nucleotide binding"/>
    <property type="evidence" value="ECO:0007669"/>
    <property type="project" value="UniProtKB-KW"/>
</dbReference>
<dbReference type="Gene3D" id="3.40.1210.10">
    <property type="entry name" value="Survival protein SurE-like phosphatase/nucleotidase"/>
    <property type="match status" value="1"/>
</dbReference>
<dbReference type="HAMAP" id="MF_00060">
    <property type="entry name" value="SurE"/>
    <property type="match status" value="1"/>
</dbReference>
<dbReference type="InterPro" id="IPR030048">
    <property type="entry name" value="SurE"/>
</dbReference>
<dbReference type="InterPro" id="IPR002828">
    <property type="entry name" value="SurE-like_Pase/nucleotidase"/>
</dbReference>
<dbReference type="InterPro" id="IPR036523">
    <property type="entry name" value="SurE-like_sf"/>
</dbReference>
<dbReference type="NCBIfam" id="NF001490">
    <property type="entry name" value="PRK00346.1-4"/>
    <property type="match status" value="1"/>
</dbReference>
<dbReference type="NCBIfam" id="NF010541">
    <property type="entry name" value="PRK13931.1"/>
    <property type="match status" value="1"/>
</dbReference>
<dbReference type="NCBIfam" id="TIGR00087">
    <property type="entry name" value="surE"/>
    <property type="match status" value="1"/>
</dbReference>
<dbReference type="PANTHER" id="PTHR30457">
    <property type="entry name" value="5'-NUCLEOTIDASE SURE"/>
    <property type="match status" value="1"/>
</dbReference>
<dbReference type="PANTHER" id="PTHR30457:SF12">
    <property type="entry name" value="5'_3'-NUCLEOTIDASE SURE"/>
    <property type="match status" value="1"/>
</dbReference>
<dbReference type="Pfam" id="PF01975">
    <property type="entry name" value="SurE"/>
    <property type="match status" value="1"/>
</dbReference>
<dbReference type="SUPFAM" id="SSF64167">
    <property type="entry name" value="SurE-like"/>
    <property type="match status" value="1"/>
</dbReference>
<comment type="function">
    <text evidence="1">Nucleotidase that shows phosphatase activity on nucleoside 5'-monophosphates.</text>
</comment>
<comment type="catalytic activity">
    <reaction evidence="1">
        <text>a ribonucleoside 5'-phosphate + H2O = a ribonucleoside + phosphate</text>
        <dbReference type="Rhea" id="RHEA:12484"/>
        <dbReference type="ChEBI" id="CHEBI:15377"/>
        <dbReference type="ChEBI" id="CHEBI:18254"/>
        <dbReference type="ChEBI" id="CHEBI:43474"/>
        <dbReference type="ChEBI" id="CHEBI:58043"/>
        <dbReference type="EC" id="3.1.3.5"/>
    </reaction>
</comment>
<comment type="cofactor">
    <cofactor evidence="1">
        <name>a divalent metal cation</name>
        <dbReference type="ChEBI" id="CHEBI:60240"/>
    </cofactor>
    <text evidence="1">Binds 1 divalent metal cation per subunit.</text>
</comment>
<comment type="subcellular location">
    <subcellularLocation>
        <location evidence="1">Cytoplasm</location>
    </subcellularLocation>
</comment>
<comment type="similarity">
    <text evidence="1">Belongs to the SurE nucleotidase family.</text>
</comment>
<protein>
    <recommendedName>
        <fullName evidence="1">5'-nucleotidase SurE</fullName>
        <ecNumber evidence="1">3.1.3.5</ecNumber>
    </recommendedName>
    <alternativeName>
        <fullName evidence="1">Nucleoside 5'-monophosphate phosphohydrolase</fullName>
    </alternativeName>
</protein>
<name>SURE_DINSH</name>
<accession>A8LQK5</accession>